<protein>
    <recommendedName>
        <fullName evidence="1">Cell division protein FtsB</fullName>
    </recommendedName>
</protein>
<keyword id="KW-0131">Cell cycle</keyword>
<keyword id="KW-0132">Cell division</keyword>
<keyword id="KW-0997">Cell inner membrane</keyword>
<keyword id="KW-1003">Cell membrane</keyword>
<keyword id="KW-0175">Coiled coil</keyword>
<keyword id="KW-0472">Membrane</keyword>
<keyword id="KW-1185">Reference proteome</keyword>
<keyword id="KW-0812">Transmembrane</keyword>
<keyword id="KW-1133">Transmembrane helix</keyword>
<accession>B7MKM2</accession>
<proteinExistence type="inferred from homology"/>
<reference key="1">
    <citation type="journal article" date="2009" name="PLoS Genet.">
        <title>Organised genome dynamics in the Escherichia coli species results in highly diverse adaptive paths.</title>
        <authorList>
            <person name="Touchon M."/>
            <person name="Hoede C."/>
            <person name="Tenaillon O."/>
            <person name="Barbe V."/>
            <person name="Baeriswyl S."/>
            <person name="Bidet P."/>
            <person name="Bingen E."/>
            <person name="Bonacorsi S."/>
            <person name="Bouchier C."/>
            <person name="Bouvet O."/>
            <person name="Calteau A."/>
            <person name="Chiapello H."/>
            <person name="Clermont O."/>
            <person name="Cruveiller S."/>
            <person name="Danchin A."/>
            <person name="Diard M."/>
            <person name="Dossat C."/>
            <person name="Karoui M.E."/>
            <person name="Frapy E."/>
            <person name="Garry L."/>
            <person name="Ghigo J.M."/>
            <person name="Gilles A.M."/>
            <person name="Johnson J."/>
            <person name="Le Bouguenec C."/>
            <person name="Lescat M."/>
            <person name="Mangenot S."/>
            <person name="Martinez-Jehanne V."/>
            <person name="Matic I."/>
            <person name="Nassif X."/>
            <person name="Oztas S."/>
            <person name="Petit M.A."/>
            <person name="Pichon C."/>
            <person name="Rouy Z."/>
            <person name="Ruf C.S."/>
            <person name="Schneider D."/>
            <person name="Tourret J."/>
            <person name="Vacherie B."/>
            <person name="Vallenet D."/>
            <person name="Medigue C."/>
            <person name="Rocha E.P.C."/>
            <person name="Denamur E."/>
        </authorList>
    </citation>
    <scope>NUCLEOTIDE SEQUENCE [LARGE SCALE GENOMIC DNA]</scope>
    <source>
        <strain>S88 / ExPEC</strain>
    </source>
</reference>
<gene>
    <name evidence="1" type="primary">ftsB</name>
    <name type="ordered locus">ECS88_3018</name>
</gene>
<organism>
    <name type="scientific">Escherichia coli O45:K1 (strain S88 / ExPEC)</name>
    <dbReference type="NCBI Taxonomy" id="585035"/>
    <lineage>
        <taxon>Bacteria</taxon>
        <taxon>Pseudomonadati</taxon>
        <taxon>Pseudomonadota</taxon>
        <taxon>Gammaproteobacteria</taxon>
        <taxon>Enterobacterales</taxon>
        <taxon>Enterobacteriaceae</taxon>
        <taxon>Escherichia</taxon>
    </lineage>
</organism>
<sequence>MGKLTLLLLAILVWLQYSLWFGKNGIHDYTRVNNDVAAQQATNAKLKARNDQLFAEIDDLNGGQEALEERARNELSMTRPGETFYRLVPDASKRAQSAGQNNR</sequence>
<evidence type="ECO:0000255" key="1">
    <source>
        <dbReference type="HAMAP-Rule" id="MF_00599"/>
    </source>
</evidence>
<dbReference type="EMBL" id="CU928161">
    <property type="protein sequence ID" value="CAR04263.1"/>
    <property type="molecule type" value="Genomic_DNA"/>
</dbReference>
<dbReference type="RefSeq" id="WP_000517479.1">
    <property type="nucleotide sequence ID" value="NC_011742.1"/>
</dbReference>
<dbReference type="SMR" id="B7MKM2"/>
<dbReference type="GeneID" id="89517564"/>
<dbReference type="KEGG" id="ecz:ECS88_3018"/>
<dbReference type="HOGENOM" id="CLU_134863_5_2_6"/>
<dbReference type="Proteomes" id="UP000000747">
    <property type="component" value="Chromosome"/>
</dbReference>
<dbReference type="GO" id="GO:0032153">
    <property type="term" value="C:cell division site"/>
    <property type="evidence" value="ECO:0007669"/>
    <property type="project" value="UniProtKB-UniRule"/>
</dbReference>
<dbReference type="GO" id="GO:0030428">
    <property type="term" value="C:cell septum"/>
    <property type="evidence" value="ECO:0007669"/>
    <property type="project" value="TreeGrafter"/>
</dbReference>
<dbReference type="GO" id="GO:0005886">
    <property type="term" value="C:plasma membrane"/>
    <property type="evidence" value="ECO:0007669"/>
    <property type="project" value="UniProtKB-SubCell"/>
</dbReference>
<dbReference type="GO" id="GO:0043093">
    <property type="term" value="P:FtsZ-dependent cytokinesis"/>
    <property type="evidence" value="ECO:0007669"/>
    <property type="project" value="UniProtKB-UniRule"/>
</dbReference>
<dbReference type="FunFam" id="1.20.5.400:FF:000001">
    <property type="entry name" value="Cell division protein FtsB"/>
    <property type="match status" value="1"/>
</dbReference>
<dbReference type="Gene3D" id="1.20.5.400">
    <property type="match status" value="1"/>
</dbReference>
<dbReference type="HAMAP" id="MF_00599">
    <property type="entry name" value="FtsB"/>
    <property type="match status" value="1"/>
</dbReference>
<dbReference type="InterPro" id="IPR023081">
    <property type="entry name" value="Cell_div_FtsB"/>
</dbReference>
<dbReference type="InterPro" id="IPR007060">
    <property type="entry name" value="FtsL/DivIC"/>
</dbReference>
<dbReference type="NCBIfam" id="NF002058">
    <property type="entry name" value="PRK00888.1"/>
    <property type="match status" value="1"/>
</dbReference>
<dbReference type="PANTHER" id="PTHR37485">
    <property type="entry name" value="CELL DIVISION PROTEIN FTSB"/>
    <property type="match status" value="1"/>
</dbReference>
<dbReference type="PANTHER" id="PTHR37485:SF1">
    <property type="entry name" value="CELL DIVISION PROTEIN FTSB"/>
    <property type="match status" value="1"/>
</dbReference>
<dbReference type="Pfam" id="PF04977">
    <property type="entry name" value="DivIC"/>
    <property type="match status" value="1"/>
</dbReference>
<feature type="chain" id="PRO_1000129922" description="Cell division protein FtsB">
    <location>
        <begin position="1"/>
        <end position="103"/>
    </location>
</feature>
<feature type="topological domain" description="Cytoplasmic" evidence="1">
    <location>
        <begin position="1"/>
        <end position="3"/>
    </location>
</feature>
<feature type="transmembrane region" description="Helical" evidence="1">
    <location>
        <begin position="4"/>
        <end position="21"/>
    </location>
</feature>
<feature type="topological domain" description="Periplasmic" evidence="1">
    <location>
        <begin position="22"/>
        <end position="103"/>
    </location>
</feature>
<feature type="coiled-coil region" evidence="1">
    <location>
        <begin position="31"/>
        <end position="71"/>
    </location>
</feature>
<name>FTSB_ECO45</name>
<comment type="function">
    <text evidence="1">Essential cell division protein. May link together the upstream cell division proteins, which are predominantly cytoplasmic, with the downstream cell division proteins, which are predominantly periplasmic.</text>
</comment>
<comment type="subunit">
    <text evidence="1">Part of a complex composed of FtsB, FtsL and FtsQ.</text>
</comment>
<comment type="subcellular location">
    <subcellularLocation>
        <location evidence="1">Cell inner membrane</location>
        <topology evidence="1">Single-pass type II membrane protein</topology>
    </subcellularLocation>
    <text evidence="1">Localizes to the division septum.</text>
</comment>
<comment type="similarity">
    <text evidence="1">Belongs to the FtsB family.</text>
</comment>